<organismHost>
    <name type="scientific">Escherichia coli</name>
    <dbReference type="NCBI Taxonomy" id="562"/>
</organismHost>
<organism>
    <name type="scientific">Escherichia phage T7</name>
    <name type="common">Bacteriophage T7</name>
    <dbReference type="NCBI Taxonomy" id="10760"/>
    <lineage>
        <taxon>Viruses</taxon>
        <taxon>Duplodnaviria</taxon>
        <taxon>Heunggongvirae</taxon>
        <taxon>Uroviricota</taxon>
        <taxon>Caudoviricetes</taxon>
        <taxon>Autographiviridae</taxon>
        <taxon>Studiervirinae</taxon>
        <taxon>Teseptimavirus</taxon>
        <taxon>Teseptimavirus T7</taxon>
    </lineage>
</organism>
<feature type="chain" id="PRO_0000106493" description="Protein 4.3">
    <location>
        <begin position="1"/>
        <end position="70"/>
    </location>
</feature>
<dbReference type="EMBL" id="V01146">
    <property type="protein sequence ID" value="CAA24409.1"/>
    <property type="molecule type" value="Genomic_DNA"/>
</dbReference>
<dbReference type="PIR" id="A04409">
    <property type="entry name" value="W4BP37"/>
</dbReference>
<dbReference type="RefSeq" id="NP_041979.1">
    <property type="nucleotide sequence ID" value="NC_001604.1"/>
</dbReference>
<dbReference type="SMR" id="P03784"/>
<dbReference type="KEGG" id="vg:1261069"/>
<dbReference type="OrthoDB" id="25868at10239"/>
<dbReference type="Proteomes" id="UP000000840">
    <property type="component" value="Genome"/>
</dbReference>
<dbReference type="InterPro" id="IPR035156">
    <property type="entry name" value="DUF5471"/>
</dbReference>
<dbReference type="Pfam" id="PF17565">
    <property type="entry name" value="DUF5471"/>
    <property type="match status" value="1"/>
</dbReference>
<sequence>MFKLIKKLGQLLVRMYNVEAKRLNDEARKEATQSRALAIRSNELADSASTKVTEAARVANQAQQLSKFFE</sequence>
<protein>
    <recommendedName>
        <fullName>Protein 4.3</fullName>
    </recommendedName>
    <alternativeName>
        <fullName>Gene product 4.3</fullName>
        <shortName>Gp4.3</shortName>
    </alternativeName>
</protein>
<accession>P03784</accession>
<reference key="1">
    <citation type="journal article" date="1983" name="J. Mol. Biol.">
        <title>Complete nucleotide sequence of bacteriophage T7 DNA and the locations of T7 genetic elements.</title>
        <authorList>
            <person name="Dunn J.J."/>
            <person name="Studier F.W."/>
        </authorList>
    </citation>
    <scope>NUCLEOTIDE SEQUENCE [LARGE SCALE GENOMIC DNA]</scope>
</reference>
<keyword id="KW-1185">Reference proteome</keyword>
<name>Y43_BPT7</name>
<gene>
    <name type="ordered locus">4.3</name>
</gene>
<proteinExistence type="predicted"/>